<organism>
    <name type="scientific">Yersinia pseudotuberculosis serotype I (strain IP32953)</name>
    <dbReference type="NCBI Taxonomy" id="273123"/>
    <lineage>
        <taxon>Bacteria</taxon>
        <taxon>Pseudomonadati</taxon>
        <taxon>Pseudomonadota</taxon>
        <taxon>Gammaproteobacteria</taxon>
        <taxon>Enterobacterales</taxon>
        <taxon>Yersiniaceae</taxon>
        <taxon>Yersinia</taxon>
    </lineage>
</organism>
<feature type="chain" id="PRO_0000298454" description="Acetyltransferase YPTB2753">
    <location>
        <begin position="1"/>
        <end position="141"/>
    </location>
</feature>
<feature type="domain" description="N-acetyltransferase" evidence="1">
    <location>
        <begin position="1"/>
        <end position="141"/>
    </location>
</feature>
<sequence>MEIRIFQQDDFEEVILLWEHCDLLRPWNDPEMDIERKLNHDPELFLVAEVNGTIVGSVMGGYDGHRGSAYYLGVHPDYRGRGFANALISRLEKKLIARGCPKLNIMVREDNDAVIGMYEKLDYETQDTIMLGKRLIVDQEY</sequence>
<reference key="1">
    <citation type="journal article" date="2004" name="Proc. Natl. Acad. Sci. U.S.A.">
        <title>Insights into the evolution of Yersinia pestis through whole-genome comparison with Yersinia pseudotuberculosis.</title>
        <authorList>
            <person name="Chain P.S.G."/>
            <person name="Carniel E."/>
            <person name="Larimer F.W."/>
            <person name="Lamerdin J."/>
            <person name="Stoutland P.O."/>
            <person name="Regala W.M."/>
            <person name="Georgescu A.M."/>
            <person name="Vergez L.M."/>
            <person name="Land M.L."/>
            <person name="Motin V.L."/>
            <person name="Brubaker R.R."/>
            <person name="Fowler J."/>
            <person name="Hinnebusch J."/>
            <person name="Marceau M."/>
            <person name="Medigue C."/>
            <person name="Simonet M."/>
            <person name="Chenal-Francisque V."/>
            <person name="Souza B."/>
            <person name="Dacheux D."/>
            <person name="Elliott J.M."/>
            <person name="Derbise A."/>
            <person name="Hauser L.J."/>
            <person name="Garcia E."/>
        </authorList>
    </citation>
    <scope>NUCLEOTIDE SEQUENCE [LARGE SCALE GENOMIC DNA]</scope>
    <source>
        <strain>IP32953</strain>
    </source>
</reference>
<dbReference type="EC" id="2.3.1.-" evidence="1"/>
<dbReference type="EMBL" id="BX936398">
    <property type="protein sequence ID" value="CAH21991.1"/>
    <property type="molecule type" value="Genomic_DNA"/>
</dbReference>
<dbReference type="RefSeq" id="WP_002208525.1">
    <property type="nucleotide sequence ID" value="NZ_CP009712.1"/>
</dbReference>
<dbReference type="SMR" id="Q668I7"/>
<dbReference type="KEGG" id="ypo:BZ17_3877"/>
<dbReference type="KEGG" id="yps:YPTB2753"/>
<dbReference type="PATRIC" id="fig|273123.14.peg.4074"/>
<dbReference type="Proteomes" id="UP000001011">
    <property type="component" value="Chromosome"/>
</dbReference>
<dbReference type="GO" id="GO:0016747">
    <property type="term" value="F:acyltransferase activity, transferring groups other than amino-acyl groups"/>
    <property type="evidence" value="ECO:0007669"/>
    <property type="project" value="UniProtKB-UniRule"/>
</dbReference>
<dbReference type="CDD" id="cd04301">
    <property type="entry name" value="NAT_SF"/>
    <property type="match status" value="1"/>
</dbReference>
<dbReference type="Gene3D" id="3.40.630.30">
    <property type="match status" value="1"/>
</dbReference>
<dbReference type="HAMAP" id="MF_01127">
    <property type="entry name" value="Acetyltransf_YpeA"/>
    <property type="match status" value="1"/>
</dbReference>
<dbReference type="InterPro" id="IPR023072">
    <property type="entry name" value="Acetyltransferase_YpeA"/>
</dbReference>
<dbReference type="InterPro" id="IPR016181">
    <property type="entry name" value="Acyl_CoA_acyltransferase"/>
</dbReference>
<dbReference type="InterPro" id="IPR000182">
    <property type="entry name" value="GNAT_dom"/>
</dbReference>
<dbReference type="NCBIfam" id="NF002959">
    <property type="entry name" value="PRK03624.1"/>
    <property type="match status" value="1"/>
</dbReference>
<dbReference type="PANTHER" id="PTHR43072:SF51">
    <property type="entry name" value="ABC SUPERFAMILY TRANSPORT PROTEIN"/>
    <property type="match status" value="1"/>
</dbReference>
<dbReference type="PANTHER" id="PTHR43072">
    <property type="entry name" value="N-ACETYLTRANSFERASE"/>
    <property type="match status" value="1"/>
</dbReference>
<dbReference type="Pfam" id="PF00583">
    <property type="entry name" value="Acetyltransf_1"/>
    <property type="match status" value="1"/>
</dbReference>
<dbReference type="SUPFAM" id="SSF55729">
    <property type="entry name" value="Acyl-CoA N-acyltransferases (Nat)"/>
    <property type="match status" value="1"/>
</dbReference>
<dbReference type="PROSITE" id="PS51186">
    <property type="entry name" value="GNAT"/>
    <property type="match status" value="1"/>
</dbReference>
<accession>Q668I7</accession>
<evidence type="ECO:0000255" key="1">
    <source>
        <dbReference type="HAMAP-Rule" id="MF_01127"/>
    </source>
</evidence>
<gene>
    <name type="ordered locus">YPTB2753</name>
</gene>
<name>Y2753_YERPS</name>
<comment type="similarity">
    <text evidence="1">Belongs to the acetyltransferase family. YpeA subfamily.</text>
</comment>
<proteinExistence type="inferred from homology"/>
<keyword id="KW-0012">Acyltransferase</keyword>
<keyword id="KW-0808">Transferase</keyword>
<protein>
    <recommendedName>
        <fullName evidence="1">Acetyltransferase YPTB2753</fullName>
        <ecNumber evidence="1">2.3.1.-</ecNumber>
    </recommendedName>
</protein>